<dbReference type="EMBL" id="GU721047">
    <property type="protein sequence ID" value="ADE28864.1"/>
    <property type="molecule type" value="mRNA"/>
</dbReference>
<dbReference type="GO" id="GO:0005576">
    <property type="term" value="C:extracellular region"/>
    <property type="evidence" value="ECO:0007669"/>
    <property type="project" value="UniProtKB-SubCell"/>
</dbReference>
<dbReference type="GO" id="GO:0090729">
    <property type="term" value="F:toxin activity"/>
    <property type="evidence" value="ECO:0007669"/>
    <property type="project" value="UniProtKB-KW"/>
</dbReference>
<comment type="subcellular location">
    <subcellularLocation>
        <location evidence="1">Secreted</location>
    </subcellularLocation>
</comment>
<comment type="tissue specificity">
    <text>Expressed by the venom duct.</text>
</comment>
<comment type="domain">
    <text>The cysteine framework is XIV (C-C-C-C).</text>
</comment>
<comment type="PTM">
    <text evidence="1">Contains 2 disulfide bonds.</text>
</comment>
<accession>D5KXG6</accession>
<sequence length="32" mass="3516">CEDGGVPSASCRANTEDYRYCNACYLQEVIGK</sequence>
<protein>
    <recommendedName>
        <fullName>Turripeptide XIV-18</fullName>
    </recommendedName>
    <alternativeName>
        <fullName>Turripeptide IX-18</fullName>
    </alternativeName>
</protein>
<name>TUEI_GEMSP</name>
<keyword id="KW-0027">Amidation</keyword>
<keyword id="KW-1015">Disulfide bond</keyword>
<keyword id="KW-0528">Neurotoxin</keyword>
<keyword id="KW-0964">Secreted</keyword>
<keyword id="KW-0800">Toxin</keyword>
<reference key="1">
    <citation type="submission" date="2010-02" db="EMBL/GenBank/DDBJ databases">
        <title>Cysteine-rich toxin gene families from Gemmula speciosa (Reeve, 1843).</title>
        <authorList>
            <person name="Uichanco J.A.V."/>
            <person name="Planta J.R.G."/>
            <person name="Santos A.D."/>
            <person name="Concepcion G.P."/>
        </authorList>
    </citation>
    <scope>NUCLEOTIDE SEQUENCE [MRNA]</scope>
    <source>
        <tissue>Venom duct</tissue>
    </source>
</reference>
<organism>
    <name type="scientific">Gemmula speciosa</name>
    <name type="common">Splendid gem-turris</name>
    <name type="synonym">Pleurotoma speciosa</name>
    <dbReference type="NCBI Taxonomy" id="439592"/>
    <lineage>
        <taxon>Eukaryota</taxon>
        <taxon>Metazoa</taxon>
        <taxon>Spiralia</taxon>
        <taxon>Lophotrochozoa</taxon>
        <taxon>Mollusca</taxon>
        <taxon>Gastropoda</taxon>
        <taxon>Caenogastropoda</taxon>
        <taxon>Neogastropoda</taxon>
        <taxon>Conoidea</taxon>
        <taxon>Turridae</taxon>
        <taxon>Gemmula</taxon>
    </lineage>
</organism>
<feature type="peptide" id="PRO_0000415076" description="Turripeptide XIV-18">
    <location>
        <begin position="1" status="less than"/>
        <end position="30"/>
    </location>
</feature>
<feature type="modified residue" description="Isoleucine amide" evidence="1">
    <location>
        <position position="30"/>
    </location>
</feature>
<feature type="non-terminal residue">
    <location>
        <position position="1"/>
    </location>
</feature>
<proteinExistence type="evidence at transcript level"/>
<evidence type="ECO:0000250" key="1"/>